<protein>
    <recommendedName>
        <fullName>Protein U59</fullName>
    </recommendedName>
</protein>
<sequence length="346" mass="39996">MNTADTPRKVGARWMNGELWGEGREYETFVFKNRCLAELLGLKEKVTIADISKHVYNGCPTNTPEVILFWKSHSSLIYILSKVTYCYSIIISSGSLNDPVMNEKPRLYLRDHVALSPMAWPESIEIEKVSMTADRCPPCDVYAENFLIQPNAHINGRLEAMLALCFCILADTTKFPARNIDFNYFIRTANQSTNPPFIQCPPLQHQFLCHVALMELGERNETNMVLNALYVEIMWVSRPVCEFSVYTEFKHKLVTTCRLLNSIYHSHEKLPKPTARADLAQSSQCVKTYFNGENVNVTVLAYGIYVLHKMSRVENPRHLVSYFQKYIRVERHVTKSQLKRLLMMYY</sequence>
<organism>
    <name type="scientific">Elephantid herpesvirus 1 (isolate Asian elephant/Berlin/Kiba/1998)</name>
    <name type="common">EIHV-1</name>
    <name type="synonym">Elephant endotheliotropic herpesvirus</name>
    <dbReference type="NCBI Taxonomy" id="654902"/>
    <lineage>
        <taxon>Viruses</taxon>
        <taxon>Duplodnaviria</taxon>
        <taxon>Heunggongvirae</taxon>
        <taxon>Peploviricota</taxon>
        <taxon>Herviviricetes</taxon>
        <taxon>Herpesvirales</taxon>
        <taxon>Orthoherpesviridae</taxon>
        <taxon>Betaherpesvirinae</taxon>
        <taxon>Proboscivirus</taxon>
        <taxon>Proboscivirus elephantidbeta1</taxon>
        <taxon>Elephantid herpesvirus 1</taxon>
    </lineage>
</organism>
<feature type="chain" id="PRO_0000408171" description="Protein U59">
    <location>
        <begin position="1"/>
        <end position="346"/>
    </location>
</feature>
<comment type="similarity">
    <text evidence="1">Belongs to the herpesviridae U59/UL88 family.</text>
</comment>
<accession>Q18LD8</accession>
<reference key="1">
    <citation type="journal article" date="2007" name="J. Virol.">
        <title>Identification of novel rodent herpesviruses, including the first gammaherpesvirus of Mus musculus.</title>
        <authorList>
            <person name="Ehlers B."/>
            <person name="Kuchler J."/>
            <person name="Yasmum N."/>
            <person name="Dural G."/>
            <person name="Voigt S."/>
            <person name="Schmidt-Chanasit J."/>
            <person name="Jakel T."/>
            <person name="Matuschka F.R."/>
            <person name="Richter D."/>
            <person name="Essbauer S."/>
            <person name="Hughes D.J."/>
            <person name="Summers C."/>
            <person name="Bennett M."/>
            <person name="Stewart J.P."/>
            <person name="Ulrich R.G."/>
        </authorList>
    </citation>
    <scope>NUCLEOTIDE SEQUENCE [GENOMIC DNA]</scope>
</reference>
<reference key="2">
    <citation type="journal article" date="2001" name="J. Gen. Virol.">
        <title>Genetic and ultrastructural characterization of a European isolate of the fatal endotheliotropic elephant herpesvirus.</title>
        <authorList>
            <person name="Ehlers B."/>
            <person name="Burkhardt S."/>
            <person name="Goltz M."/>
            <person name="Bergmann V."/>
            <person name="Ochs A."/>
            <person name="Weiler H."/>
            <person name="Hentschke J."/>
        </authorList>
    </citation>
    <scope>NUCLEOTIDE SEQUENCE [GENOMIC DNA]</scope>
</reference>
<evidence type="ECO:0000305" key="1"/>
<organismHost>
    <name type="scientific">Elephas maximus</name>
    <name type="common">Indian elephant</name>
    <dbReference type="NCBI Taxonomy" id="9783"/>
</organismHost>
<organismHost>
    <name type="scientific">Loxodonta africana</name>
    <name type="common">African elephant</name>
    <dbReference type="NCBI Taxonomy" id="9785"/>
</organismHost>
<organismHost>
    <name type="scientific">Loxodonta cyclotis</name>
    <name type="common">African forest elephant</name>
    <dbReference type="NCBI Taxonomy" id="99490"/>
</organismHost>
<dbReference type="EMBL" id="AF322977">
    <property type="protein sequence ID" value="ABG36581.1"/>
    <property type="molecule type" value="Genomic_DNA"/>
</dbReference>
<dbReference type="InterPro" id="IPR007616">
    <property type="entry name" value="Herpes_U59/UL88"/>
</dbReference>
<dbReference type="Pfam" id="PF04529">
    <property type="entry name" value="Herpes_U59"/>
    <property type="match status" value="1"/>
</dbReference>
<proteinExistence type="inferred from homology"/>
<name>UL88_ELHVK</name>